<comment type="function">
    <text evidence="1">Specifically methylates the N4 position of cytidine in position 1402 (C1402) of 16S rRNA.</text>
</comment>
<comment type="catalytic activity">
    <reaction evidence="1">
        <text>cytidine(1402) in 16S rRNA + S-adenosyl-L-methionine = N(4)-methylcytidine(1402) in 16S rRNA + S-adenosyl-L-homocysteine + H(+)</text>
        <dbReference type="Rhea" id="RHEA:42928"/>
        <dbReference type="Rhea" id="RHEA-COMP:10286"/>
        <dbReference type="Rhea" id="RHEA-COMP:10287"/>
        <dbReference type="ChEBI" id="CHEBI:15378"/>
        <dbReference type="ChEBI" id="CHEBI:57856"/>
        <dbReference type="ChEBI" id="CHEBI:59789"/>
        <dbReference type="ChEBI" id="CHEBI:74506"/>
        <dbReference type="ChEBI" id="CHEBI:82748"/>
        <dbReference type="EC" id="2.1.1.199"/>
    </reaction>
</comment>
<comment type="subcellular location">
    <subcellularLocation>
        <location evidence="1">Cytoplasm</location>
    </subcellularLocation>
</comment>
<comment type="similarity">
    <text evidence="1">Belongs to the methyltransferase superfamily. RsmH family.</text>
</comment>
<feature type="chain" id="PRO_0000387043" description="Ribosomal RNA small subunit methyltransferase H">
    <location>
        <begin position="1"/>
        <end position="300"/>
    </location>
</feature>
<feature type="binding site" evidence="1">
    <location>
        <begin position="46"/>
        <end position="48"/>
    </location>
    <ligand>
        <name>S-adenosyl-L-methionine</name>
        <dbReference type="ChEBI" id="CHEBI:59789"/>
    </ligand>
</feature>
<feature type="binding site" evidence="1">
    <location>
        <position position="65"/>
    </location>
    <ligand>
        <name>S-adenosyl-L-methionine</name>
        <dbReference type="ChEBI" id="CHEBI:59789"/>
    </ligand>
</feature>
<feature type="binding site" evidence="1">
    <location>
        <position position="92"/>
    </location>
    <ligand>
        <name>S-adenosyl-L-methionine</name>
        <dbReference type="ChEBI" id="CHEBI:59789"/>
    </ligand>
</feature>
<feature type="binding site" evidence="1">
    <location>
        <position position="107"/>
    </location>
    <ligand>
        <name>S-adenosyl-L-methionine</name>
        <dbReference type="ChEBI" id="CHEBI:59789"/>
    </ligand>
</feature>
<feature type="binding site" evidence="1">
    <location>
        <position position="114"/>
    </location>
    <ligand>
        <name>S-adenosyl-L-methionine</name>
        <dbReference type="ChEBI" id="CHEBI:59789"/>
    </ligand>
</feature>
<organism>
    <name type="scientific">Prochlorococcus marinus (strain MIT 9515)</name>
    <dbReference type="NCBI Taxonomy" id="167542"/>
    <lineage>
        <taxon>Bacteria</taxon>
        <taxon>Bacillati</taxon>
        <taxon>Cyanobacteriota</taxon>
        <taxon>Cyanophyceae</taxon>
        <taxon>Synechococcales</taxon>
        <taxon>Prochlorococcaceae</taxon>
        <taxon>Prochlorococcus</taxon>
    </lineage>
</organism>
<reference key="1">
    <citation type="journal article" date="2007" name="PLoS Genet.">
        <title>Patterns and implications of gene gain and loss in the evolution of Prochlorococcus.</title>
        <authorList>
            <person name="Kettler G.C."/>
            <person name="Martiny A.C."/>
            <person name="Huang K."/>
            <person name="Zucker J."/>
            <person name="Coleman M.L."/>
            <person name="Rodrigue S."/>
            <person name="Chen F."/>
            <person name="Lapidus A."/>
            <person name="Ferriera S."/>
            <person name="Johnson J."/>
            <person name="Steglich C."/>
            <person name="Church G.M."/>
            <person name="Richardson P."/>
            <person name="Chisholm S.W."/>
        </authorList>
    </citation>
    <scope>NUCLEOTIDE SEQUENCE [LARGE SCALE GENOMIC DNA]</scope>
    <source>
        <strain>MIT 9515</strain>
    </source>
</reference>
<proteinExistence type="inferred from homology"/>
<protein>
    <recommendedName>
        <fullName evidence="1">Ribosomal RNA small subunit methyltransferase H</fullName>
        <ecNumber evidence="1">2.1.1.199</ecNumber>
    </recommendedName>
    <alternativeName>
        <fullName evidence="1">16S rRNA m(4)C1402 methyltransferase</fullName>
    </alternativeName>
    <alternativeName>
        <fullName evidence="1">rRNA (cytosine-N(4)-)-methyltransferase RsmH</fullName>
    </alternativeName>
</protein>
<name>RSMH_PROM5</name>
<gene>
    <name evidence="1" type="primary">rsmH</name>
    <name type="synonym">mraW</name>
    <name type="ordered locus">P9515_02001</name>
</gene>
<evidence type="ECO:0000255" key="1">
    <source>
        <dbReference type="HAMAP-Rule" id="MF_01007"/>
    </source>
</evidence>
<dbReference type="EC" id="2.1.1.199" evidence="1"/>
<dbReference type="EMBL" id="CP000552">
    <property type="protein sequence ID" value="ABM71409.1"/>
    <property type="molecule type" value="Genomic_DNA"/>
</dbReference>
<dbReference type="RefSeq" id="WP_011819523.1">
    <property type="nucleotide sequence ID" value="NC_008817.1"/>
</dbReference>
<dbReference type="SMR" id="A2BUE8"/>
<dbReference type="STRING" id="167542.P9515_02001"/>
<dbReference type="GeneID" id="60202131"/>
<dbReference type="KEGG" id="pmc:P9515_02001"/>
<dbReference type="eggNOG" id="COG0275">
    <property type="taxonomic scope" value="Bacteria"/>
</dbReference>
<dbReference type="HOGENOM" id="CLU_038422_3_0_3"/>
<dbReference type="OrthoDB" id="9806637at2"/>
<dbReference type="Proteomes" id="UP000001589">
    <property type="component" value="Chromosome"/>
</dbReference>
<dbReference type="GO" id="GO:0005737">
    <property type="term" value="C:cytoplasm"/>
    <property type="evidence" value="ECO:0007669"/>
    <property type="project" value="UniProtKB-SubCell"/>
</dbReference>
<dbReference type="GO" id="GO:0071424">
    <property type="term" value="F:rRNA (cytosine-N4-)-methyltransferase activity"/>
    <property type="evidence" value="ECO:0007669"/>
    <property type="project" value="UniProtKB-UniRule"/>
</dbReference>
<dbReference type="GO" id="GO:0070475">
    <property type="term" value="P:rRNA base methylation"/>
    <property type="evidence" value="ECO:0007669"/>
    <property type="project" value="UniProtKB-UniRule"/>
</dbReference>
<dbReference type="CDD" id="cd02440">
    <property type="entry name" value="AdoMet_MTases"/>
    <property type="match status" value="1"/>
</dbReference>
<dbReference type="Gene3D" id="1.10.150.170">
    <property type="entry name" value="Putative methyltransferase TM0872, insert domain"/>
    <property type="match status" value="1"/>
</dbReference>
<dbReference type="Gene3D" id="3.40.50.150">
    <property type="entry name" value="Vaccinia Virus protein VP39"/>
    <property type="match status" value="1"/>
</dbReference>
<dbReference type="HAMAP" id="MF_01007">
    <property type="entry name" value="16SrRNA_methyltr_H"/>
    <property type="match status" value="1"/>
</dbReference>
<dbReference type="InterPro" id="IPR002903">
    <property type="entry name" value="RsmH"/>
</dbReference>
<dbReference type="InterPro" id="IPR023397">
    <property type="entry name" value="SAM-dep_MeTrfase_MraW_recog"/>
</dbReference>
<dbReference type="InterPro" id="IPR029063">
    <property type="entry name" value="SAM-dependent_MTases_sf"/>
</dbReference>
<dbReference type="NCBIfam" id="TIGR00006">
    <property type="entry name" value="16S rRNA (cytosine(1402)-N(4))-methyltransferase RsmH"/>
    <property type="match status" value="1"/>
</dbReference>
<dbReference type="PANTHER" id="PTHR11265:SF0">
    <property type="entry name" value="12S RRNA N4-METHYLCYTIDINE METHYLTRANSFERASE"/>
    <property type="match status" value="1"/>
</dbReference>
<dbReference type="PANTHER" id="PTHR11265">
    <property type="entry name" value="S-ADENOSYL-METHYLTRANSFERASE MRAW"/>
    <property type="match status" value="1"/>
</dbReference>
<dbReference type="Pfam" id="PF01795">
    <property type="entry name" value="Methyltransf_5"/>
    <property type="match status" value="1"/>
</dbReference>
<dbReference type="PIRSF" id="PIRSF004486">
    <property type="entry name" value="MraW"/>
    <property type="match status" value="1"/>
</dbReference>
<dbReference type="SUPFAM" id="SSF81799">
    <property type="entry name" value="Putative methyltransferase TM0872, insert domain"/>
    <property type="match status" value="1"/>
</dbReference>
<dbReference type="SUPFAM" id="SSF53335">
    <property type="entry name" value="S-adenosyl-L-methionine-dependent methyltransferases"/>
    <property type="match status" value="1"/>
</dbReference>
<sequence length="300" mass="34207">MQTDLSNSSLFNHKSVMTDEILYSIDQYPFISDNKLTAIDATLGGGGHSYQLLKKYPDLKIIGLDHDPIARESALNKLEEFKSRIEIIPSNFSNFEPKEKVSFVIADLGVNSNQIDSPERGFSFQKDGPLDMRMNPLIKMNAENLIETLSEKDLADLIFKFGDERLSRKISRKIKKDLKEKGKYSGTKDLAYSIAGCFPPKQRYRKIHPATRTFQALRIAVNNEIEALEKFLKIAPDWLLTGGIISIISFHSIEDRLVKNSFKGDYRLKNLTKKPITPNKKEIENNKRSRSAKLRIAQLK</sequence>
<accession>A2BUE8</accession>
<keyword id="KW-0963">Cytoplasm</keyword>
<keyword id="KW-0489">Methyltransferase</keyword>
<keyword id="KW-0698">rRNA processing</keyword>
<keyword id="KW-0949">S-adenosyl-L-methionine</keyword>
<keyword id="KW-0808">Transferase</keyword>